<comment type="function">
    <text evidence="1">APOE is an apolipoprotein, a protein associating with lipid particles, that mainly functions in lipoprotein-mediated lipid transport between organs via the plasma and interstitial fluids. APOE is a core component of plasma lipoproteins and is involved in their production, conversion and clearance. Apolipoproteins are amphipathic molecules that interact both with lipids of the lipoprotein particle core and the aqueous environment of the plasma. As such, APOE associates with chylomicrons, chylomicron remnants, very low density lipoproteins (VLDL) and intermediate density lipoproteins (IDL) but shows a preferential binding to high-density lipoproteins (HDL). It also binds a wide range of cellular receptors including the LDL receptor/LDLR, the LDL receptor-related proteins LRP1, LRP2 and LRP8 and the very low-density lipoprotein receptor/VLDLR that mediate the cellular uptake of the APOE-containing lipoprotein particles. Finally, APOE also has a heparin-binding activity and binds heparan-sulfate proteoglycans on the surface of cells, a property that supports the capture and the receptor-mediated uptake of APOE-containing lipoproteins by cells. A main function of APOE is to mediate lipoprotein clearance through the uptake of chylomicrons, VLDLs, and HDLs by hepatocytes. APOE is also involved in the biosynthesis by the liver of VLDLs as well as their uptake by peripheral tissues ensuring the delivery of triglycerides and energy storage in muscle, heart and adipose tissues. By participating in the lipoprotein-mediated distribution of lipids among tissues, APOE plays a critical role in plasma and tissues lipid homeostasis. APOE is also involved in two steps of reverse cholesterol transport, the HDLs-mediated transport of cholesterol from peripheral tissues to the liver, and thereby plays an important role in cholesterol homeostasis. First, it is functionally associated with ABCA1 in the biogenesis of HDLs in tissues. Second, it is enriched in circulating HDLs and mediates their uptake by hepatocytes. APOE also plays an important role in lipid transport in the central nervous system, regulating neuron survival and sprouting.</text>
</comment>
<comment type="subunit">
    <text evidence="1">Homotetramer. May interact with ABCA1; functionally associated with ABCA1 in the biogenesis of HDLs. May interact with APP/A4 amyloid-beta peptide; the interaction is extremely stable in vitro but its physiological significance is unclear. May interact with MAPT. May interact with MAP2. In the cerebrospinal fluid, interacts with secreted SORL1. Interacts with PMEL; this allows the loading of PMEL luminal fragment on ILVs to induce fibril nucleation.</text>
</comment>
<comment type="subcellular location">
    <subcellularLocation>
        <location evidence="1">Secreted</location>
    </subcellularLocation>
    <subcellularLocation>
        <location evidence="1">Secreted</location>
        <location evidence="1">Extracellular space</location>
    </subcellularLocation>
    <subcellularLocation>
        <location evidence="1">Secreted</location>
        <location evidence="1">Extracellular space</location>
        <location evidence="1">Extracellular matrix</location>
    </subcellularLocation>
    <subcellularLocation>
        <location evidence="1">Extracellular vesicle</location>
    </subcellularLocation>
    <subcellularLocation>
        <location evidence="1">Endosome</location>
        <location evidence="1">Multivesicular body</location>
    </subcellularLocation>
    <text evidence="1">In the plasma, APOE is associated with chylomicrons, chylomicrons remnants, VLDL, LDL and HDL lipoproteins. Lipid poor oligomeric APOE is associated with the extracellular matrix in a calcium- and heparan-sulfate proteoglycans-dependent manner. Lipidation induces the release from the extracellular matrix. Colocalizes with CD63 and PMEL at exosomes and in intraluminal vesicles within multivesicular endosomes.</text>
</comment>
<comment type="PTM">
    <text evidence="1">APOE exists as multiple glycosylated and sialylated glycoforms within cells and in plasma. The extent of glycosylation and sialylation are tissue and context specific.</text>
</comment>
<comment type="PTM">
    <text evidence="1">Glycated in plasma VLDL.</text>
</comment>
<comment type="PTM">
    <text evidence="1">Phosphorylated by FAM20C in the extracellular medium.</text>
</comment>
<comment type="similarity">
    <text evidence="4">Belongs to the apolipoprotein A1/A4/E family.</text>
</comment>
<gene>
    <name type="primary">APOE</name>
</gene>
<reference key="1">
    <citation type="submission" date="2012-10" db="EMBL/GenBank/DDBJ databases">
        <title>The Draft Genome of Microtus ochrogaster.</title>
        <authorList>
            <person name="Di Palma F."/>
            <person name="Alfoldi J."/>
            <person name="Johnson J."/>
            <person name="Berlin A."/>
            <person name="Gnerre S."/>
            <person name="Jaffe D."/>
            <person name="MacCallum I."/>
            <person name="Young S."/>
            <person name="Walker B.J."/>
            <person name="Lindblad-Toh K."/>
        </authorList>
    </citation>
    <scope>NUCLEOTIDE SEQUENCE [LARGE SCALE GENOMIC DNA]</scope>
</reference>
<reference key="2">
    <citation type="unpublished observations" date="2021-07">
        <authorList>
            <person name="Puppione D.L."/>
        </authorList>
    </citation>
    <scope>IDENTIFICATION</scope>
</reference>
<sequence>MKALWAVLVVTLLAGCLAEGDPELEPEVTDQLGWQTNQPWEQALGRFWDYLRWVQTLSDQVQQELQTSQVTQELTVLMEDTMTELKAYKKELEEQMGPMAEETRARLAKEVQAAQSRLGADMEDLRNRLGLYRNEVQTMLGQSTEELRARLTTHLRKLRKRLMRDAEDLQKRLAVYKAGAREGAERGVGAIRERLGPLVEQGRQRTANLGAGAAQPLRERAQALGARIRGRLEEVGNQARDRLEEVREQMEEVRAKVEEQAQQMRLQAEIFQTRLKGWFEPLVEDMQRQWANLMEKIQASVATNPIPPSSVPQESQ</sequence>
<name>APOE_MICOH</name>
<keyword id="KW-0162">Chylomicron</keyword>
<keyword id="KW-0967">Endosome</keyword>
<keyword id="KW-0272">Extracellular matrix</keyword>
<keyword id="KW-0325">Glycoprotein</keyword>
<keyword id="KW-0345">HDL</keyword>
<keyword id="KW-0358">Heparin-binding</keyword>
<keyword id="KW-0445">Lipid transport</keyword>
<keyword id="KW-0446">Lipid-binding</keyword>
<keyword id="KW-0558">Oxidation</keyword>
<keyword id="KW-0597">Phosphoprotein</keyword>
<keyword id="KW-0677">Repeat</keyword>
<keyword id="KW-0964">Secreted</keyword>
<keyword id="KW-0732">Signal</keyword>
<keyword id="KW-0813">Transport</keyword>
<keyword id="KW-0850">VLDL</keyword>
<accession>P0DUZ4</accession>
<organism>
    <name type="scientific">Microtus ochrogaster</name>
    <name type="common">Prairie vole</name>
    <dbReference type="NCBI Taxonomy" id="79684"/>
    <lineage>
        <taxon>Eukaryota</taxon>
        <taxon>Metazoa</taxon>
        <taxon>Chordata</taxon>
        <taxon>Craniata</taxon>
        <taxon>Vertebrata</taxon>
        <taxon>Euteleostomi</taxon>
        <taxon>Mammalia</taxon>
        <taxon>Eutheria</taxon>
        <taxon>Euarchontoglires</taxon>
        <taxon>Glires</taxon>
        <taxon>Rodentia</taxon>
        <taxon>Myomorpha</taxon>
        <taxon>Muroidea</taxon>
        <taxon>Cricetidae</taxon>
        <taxon>Arvicolinae</taxon>
        <taxon>Microtus</taxon>
    </lineage>
</organism>
<protein>
    <recommendedName>
        <fullName>Apolipoprotein E</fullName>
        <shortName>Apo-E</shortName>
    </recommendedName>
</protein>
<evidence type="ECO:0000250" key="1">
    <source>
        <dbReference type="UniProtKB" id="P02649"/>
    </source>
</evidence>
<evidence type="ECO:0000250" key="2">
    <source>
        <dbReference type="UniProtKB" id="P08226"/>
    </source>
</evidence>
<evidence type="ECO:0000255" key="3"/>
<evidence type="ECO:0000305" key="4"/>
<proteinExistence type="inferred from homology"/>
<dbReference type="EMBL" id="AHZW01164715">
    <property type="status" value="NOT_ANNOTATED_CDS"/>
    <property type="molecule type" value="Genomic_DNA"/>
</dbReference>
<dbReference type="RefSeq" id="XP_005370368.1">
    <property type="nucleotide sequence ID" value="XM_005370311.2"/>
</dbReference>
<dbReference type="SMR" id="P0DUZ4"/>
<dbReference type="GeneID" id="101989934"/>
<dbReference type="CTD" id="348"/>
<dbReference type="OrthoDB" id="9048614at2759"/>
<dbReference type="Proteomes" id="UP000694915">
    <property type="component" value="Unplaced"/>
</dbReference>
<dbReference type="GO" id="GO:0042627">
    <property type="term" value="C:chylomicron"/>
    <property type="evidence" value="ECO:0007669"/>
    <property type="project" value="UniProtKB-KW"/>
</dbReference>
<dbReference type="GO" id="GO:0070062">
    <property type="term" value="C:extracellular exosome"/>
    <property type="evidence" value="ECO:0000250"/>
    <property type="project" value="UniProtKB"/>
</dbReference>
<dbReference type="GO" id="GO:0034364">
    <property type="term" value="C:high-density lipoprotein particle"/>
    <property type="evidence" value="ECO:0007669"/>
    <property type="project" value="UniProtKB-KW"/>
</dbReference>
<dbReference type="GO" id="GO:0034362">
    <property type="term" value="C:low-density lipoprotein particle"/>
    <property type="evidence" value="ECO:0007669"/>
    <property type="project" value="TreeGrafter"/>
</dbReference>
<dbReference type="GO" id="GO:0097487">
    <property type="term" value="C:multivesicular body, internal vesicle"/>
    <property type="evidence" value="ECO:0000250"/>
    <property type="project" value="UniProtKB"/>
</dbReference>
<dbReference type="GO" id="GO:0034361">
    <property type="term" value="C:very-low-density lipoprotein particle"/>
    <property type="evidence" value="ECO:0007669"/>
    <property type="project" value="UniProtKB-KW"/>
</dbReference>
<dbReference type="GO" id="GO:0120020">
    <property type="term" value="F:cholesterol transfer activity"/>
    <property type="evidence" value="ECO:0007669"/>
    <property type="project" value="TreeGrafter"/>
</dbReference>
<dbReference type="GO" id="GO:0008201">
    <property type="term" value="F:heparin binding"/>
    <property type="evidence" value="ECO:0007669"/>
    <property type="project" value="UniProtKB-KW"/>
</dbReference>
<dbReference type="GO" id="GO:0060228">
    <property type="term" value="F:phosphatidylcholine-sterol O-acyltransferase activator activity"/>
    <property type="evidence" value="ECO:0007669"/>
    <property type="project" value="TreeGrafter"/>
</dbReference>
<dbReference type="GO" id="GO:0005543">
    <property type="term" value="F:phospholipid binding"/>
    <property type="evidence" value="ECO:0007669"/>
    <property type="project" value="TreeGrafter"/>
</dbReference>
<dbReference type="GO" id="GO:0055090">
    <property type="term" value="P:acylglycerol homeostasis"/>
    <property type="evidence" value="ECO:0007669"/>
    <property type="project" value="TreeGrafter"/>
</dbReference>
<dbReference type="GO" id="GO:0033344">
    <property type="term" value="P:cholesterol efflux"/>
    <property type="evidence" value="ECO:0007669"/>
    <property type="project" value="TreeGrafter"/>
</dbReference>
<dbReference type="GO" id="GO:0008203">
    <property type="term" value="P:cholesterol metabolic process"/>
    <property type="evidence" value="ECO:0007669"/>
    <property type="project" value="TreeGrafter"/>
</dbReference>
<dbReference type="GO" id="GO:0042157">
    <property type="term" value="P:lipoprotein metabolic process"/>
    <property type="evidence" value="ECO:0007669"/>
    <property type="project" value="InterPro"/>
</dbReference>
<dbReference type="GO" id="GO:0032438">
    <property type="term" value="P:melanosome organization"/>
    <property type="evidence" value="ECO:0000250"/>
    <property type="project" value="UniProtKB"/>
</dbReference>
<dbReference type="GO" id="GO:0033700">
    <property type="term" value="P:phospholipid efflux"/>
    <property type="evidence" value="ECO:0007669"/>
    <property type="project" value="TreeGrafter"/>
</dbReference>
<dbReference type="FunFam" id="1.20.120.20:FF:000002">
    <property type="entry name" value="Apolipoprotein E"/>
    <property type="match status" value="1"/>
</dbReference>
<dbReference type="FunFam" id="1.20.120.20:FF:000003">
    <property type="entry name" value="Apolipoprotein E"/>
    <property type="match status" value="1"/>
</dbReference>
<dbReference type="Gene3D" id="1.20.120.20">
    <property type="entry name" value="Apolipoprotein"/>
    <property type="match status" value="2"/>
</dbReference>
<dbReference type="InterPro" id="IPR000074">
    <property type="entry name" value="ApoA_E"/>
</dbReference>
<dbReference type="InterPro" id="IPR050163">
    <property type="entry name" value="Apolipoprotein_A1/A4/E"/>
</dbReference>
<dbReference type="PANTHER" id="PTHR18976">
    <property type="entry name" value="APOLIPOPROTEIN"/>
    <property type="match status" value="1"/>
</dbReference>
<dbReference type="PANTHER" id="PTHR18976:SF2">
    <property type="entry name" value="APOLIPOPROTEIN E"/>
    <property type="match status" value="1"/>
</dbReference>
<dbReference type="Pfam" id="PF01442">
    <property type="entry name" value="Apolipoprotein"/>
    <property type="match status" value="1"/>
</dbReference>
<dbReference type="SUPFAM" id="SSF58113">
    <property type="entry name" value="Apolipoprotein A-I"/>
    <property type="match status" value="1"/>
</dbReference>
<feature type="signal peptide" evidence="3">
    <location>
        <begin position="1"/>
        <end position="18"/>
    </location>
</feature>
<feature type="chain" id="PRO_0000454018" description="Apolipoprotein E">
    <location>
        <begin position="19"/>
        <end position="316"/>
    </location>
</feature>
<feature type="repeat" description="1">
    <location>
        <begin position="76"/>
        <end position="97"/>
    </location>
</feature>
<feature type="repeat" description="2">
    <location>
        <begin position="98"/>
        <end position="119"/>
    </location>
</feature>
<feature type="repeat" description="3">
    <location>
        <begin position="120"/>
        <end position="141"/>
    </location>
</feature>
<feature type="repeat" description="4">
    <location>
        <begin position="142"/>
        <end position="163"/>
    </location>
</feature>
<feature type="repeat" description="5">
    <location>
        <begin position="164"/>
        <end position="185"/>
    </location>
</feature>
<feature type="repeat" description="6">
    <location>
        <begin position="186"/>
        <end position="207"/>
    </location>
</feature>
<feature type="repeat" description="7">
    <location>
        <begin position="208"/>
        <end position="229"/>
    </location>
</feature>
<feature type="repeat" description="8">
    <location>
        <begin position="230"/>
        <end position="251"/>
    </location>
</feature>
<feature type="region of interest" description="8 X 22 AA approximate tandem repeats">
    <location>
        <begin position="76"/>
        <end position="251"/>
    </location>
</feature>
<feature type="region of interest" description="LDL and other lipoprotein receptors binding" evidence="1">
    <location>
        <begin position="154"/>
        <end position="164"/>
    </location>
</feature>
<feature type="region of interest" description="Lipid-binding and lipoprotein association" evidence="1">
    <location>
        <begin position="206"/>
        <end position="286"/>
    </location>
</feature>
<feature type="region of interest" description="Homooligomerization" evidence="1">
    <location>
        <begin position="262"/>
        <end position="316"/>
    </location>
</feature>
<feature type="region of interest" description="Specificity for association with VLDL" evidence="1">
    <location>
        <begin position="274"/>
        <end position="286"/>
    </location>
</feature>
<feature type="binding site" evidence="1">
    <location>
        <begin position="158"/>
        <end position="161"/>
    </location>
    <ligand>
        <name>heparin</name>
        <dbReference type="ChEBI" id="CHEBI:28304"/>
    </ligand>
</feature>
<feature type="binding site" evidence="1">
    <location>
        <begin position="225"/>
        <end position="232"/>
    </location>
    <ligand>
        <name>heparin</name>
        <dbReference type="ChEBI" id="CHEBI:28304"/>
    </ligand>
</feature>
<feature type="modified residue" description="Methionine sulfoxide" evidence="2">
    <location>
        <position position="139"/>
    </location>
</feature>
<feature type="modified residue" description="Phosphoserine" evidence="2">
    <location>
        <position position="143"/>
    </location>
</feature>